<proteinExistence type="inferred from homology"/>
<name>SYS_RICBR</name>
<sequence length="426" mass="48559">MLNIKWIRENQELFDDKLRQRFIEPMAKRIEELDGKKRKITNLIQEFQHARKVKSKILGNINPKSGEEFEGLQRDVKDINEKLEELEQDLNNNNELNELLNTLPNIPDEEVPYGIDESMNKLIRTHGEVDLNAQNKKQHFELGVKLDLMDFEQTAKISGARFVTLKGDLAKLERALANFMLDVHTGEFGFLEVSPPVLVRDNAMYNSGQLPKFADESFATTNGYRLIPTAEVSLVNMVADTIIPREKLPMRLVAYTPCFRSEAGSSGRDTRGMIRLHQFSKVELVSITTPEESKNEHEYMTNASETILQKLGLHYRTMLLCTGDMGFASQKTYDIEVWLPGQKQYREIASCSNCGDFQARRMKARYKEFGSHDTTLVHTLNASGLPIGRTMVAILENYQNEDGSITVPDVLVNYMGGLQKITAYKE</sequence>
<accession>Q1RKF4</accession>
<reference key="1">
    <citation type="journal article" date="2006" name="PLoS Genet.">
        <title>Genome sequence of Rickettsia bellii illuminates the role of amoebae in gene exchanges between intracellular pathogens.</title>
        <authorList>
            <person name="Ogata H."/>
            <person name="La Scola B."/>
            <person name="Audic S."/>
            <person name="Renesto P."/>
            <person name="Blanc G."/>
            <person name="Robert C."/>
            <person name="Fournier P.-E."/>
            <person name="Claverie J.-M."/>
            <person name="Raoult D."/>
        </authorList>
    </citation>
    <scope>NUCLEOTIDE SEQUENCE [LARGE SCALE GENOMIC DNA]</scope>
    <source>
        <strain>RML369-C</strain>
    </source>
</reference>
<dbReference type="EC" id="6.1.1.11" evidence="1"/>
<dbReference type="EMBL" id="CP000087">
    <property type="protein sequence ID" value="ABE04160.1"/>
    <property type="molecule type" value="Genomic_DNA"/>
</dbReference>
<dbReference type="RefSeq" id="WP_011476775.1">
    <property type="nucleotide sequence ID" value="NC_007940.1"/>
</dbReference>
<dbReference type="SMR" id="Q1RKF4"/>
<dbReference type="KEGG" id="rbe:RBE_0079"/>
<dbReference type="eggNOG" id="COG0172">
    <property type="taxonomic scope" value="Bacteria"/>
</dbReference>
<dbReference type="HOGENOM" id="CLU_023797_1_1_5"/>
<dbReference type="OrthoDB" id="9804647at2"/>
<dbReference type="UniPathway" id="UPA00906">
    <property type="reaction ID" value="UER00895"/>
</dbReference>
<dbReference type="Proteomes" id="UP000001951">
    <property type="component" value="Chromosome"/>
</dbReference>
<dbReference type="GO" id="GO:0005737">
    <property type="term" value="C:cytoplasm"/>
    <property type="evidence" value="ECO:0007669"/>
    <property type="project" value="UniProtKB-SubCell"/>
</dbReference>
<dbReference type="GO" id="GO:0005524">
    <property type="term" value="F:ATP binding"/>
    <property type="evidence" value="ECO:0007669"/>
    <property type="project" value="UniProtKB-UniRule"/>
</dbReference>
<dbReference type="GO" id="GO:0004828">
    <property type="term" value="F:serine-tRNA ligase activity"/>
    <property type="evidence" value="ECO:0007669"/>
    <property type="project" value="UniProtKB-UniRule"/>
</dbReference>
<dbReference type="GO" id="GO:0016260">
    <property type="term" value="P:selenocysteine biosynthetic process"/>
    <property type="evidence" value="ECO:0007669"/>
    <property type="project" value="UniProtKB-UniRule"/>
</dbReference>
<dbReference type="GO" id="GO:0006434">
    <property type="term" value="P:seryl-tRNA aminoacylation"/>
    <property type="evidence" value="ECO:0007669"/>
    <property type="project" value="UniProtKB-UniRule"/>
</dbReference>
<dbReference type="CDD" id="cd00770">
    <property type="entry name" value="SerRS_core"/>
    <property type="match status" value="1"/>
</dbReference>
<dbReference type="Gene3D" id="3.30.930.10">
    <property type="entry name" value="Bira Bifunctional Protein, Domain 2"/>
    <property type="match status" value="1"/>
</dbReference>
<dbReference type="Gene3D" id="1.10.287.40">
    <property type="entry name" value="Serine-tRNA synthetase, tRNA binding domain"/>
    <property type="match status" value="1"/>
</dbReference>
<dbReference type="HAMAP" id="MF_00176">
    <property type="entry name" value="Ser_tRNA_synth_type1"/>
    <property type="match status" value="1"/>
</dbReference>
<dbReference type="InterPro" id="IPR002314">
    <property type="entry name" value="aa-tRNA-synt_IIb"/>
</dbReference>
<dbReference type="InterPro" id="IPR006195">
    <property type="entry name" value="aa-tRNA-synth_II"/>
</dbReference>
<dbReference type="InterPro" id="IPR045864">
    <property type="entry name" value="aa-tRNA-synth_II/BPL/LPL"/>
</dbReference>
<dbReference type="InterPro" id="IPR002317">
    <property type="entry name" value="Ser-tRNA-ligase_type_1"/>
</dbReference>
<dbReference type="InterPro" id="IPR015866">
    <property type="entry name" value="Ser-tRNA-synth_1_N"/>
</dbReference>
<dbReference type="InterPro" id="IPR042103">
    <property type="entry name" value="SerRS_1_N_sf"/>
</dbReference>
<dbReference type="InterPro" id="IPR033729">
    <property type="entry name" value="SerRS_core"/>
</dbReference>
<dbReference type="InterPro" id="IPR010978">
    <property type="entry name" value="tRNA-bd_arm"/>
</dbReference>
<dbReference type="NCBIfam" id="TIGR00414">
    <property type="entry name" value="serS"/>
    <property type="match status" value="1"/>
</dbReference>
<dbReference type="PANTHER" id="PTHR43697:SF1">
    <property type="entry name" value="SERINE--TRNA LIGASE"/>
    <property type="match status" value="1"/>
</dbReference>
<dbReference type="PANTHER" id="PTHR43697">
    <property type="entry name" value="SERYL-TRNA SYNTHETASE"/>
    <property type="match status" value="1"/>
</dbReference>
<dbReference type="Pfam" id="PF02403">
    <property type="entry name" value="Seryl_tRNA_N"/>
    <property type="match status" value="1"/>
</dbReference>
<dbReference type="Pfam" id="PF00587">
    <property type="entry name" value="tRNA-synt_2b"/>
    <property type="match status" value="1"/>
</dbReference>
<dbReference type="PIRSF" id="PIRSF001529">
    <property type="entry name" value="Ser-tRNA-synth_IIa"/>
    <property type="match status" value="1"/>
</dbReference>
<dbReference type="PRINTS" id="PR00981">
    <property type="entry name" value="TRNASYNTHSER"/>
</dbReference>
<dbReference type="SUPFAM" id="SSF55681">
    <property type="entry name" value="Class II aaRS and biotin synthetases"/>
    <property type="match status" value="1"/>
</dbReference>
<dbReference type="SUPFAM" id="SSF46589">
    <property type="entry name" value="tRNA-binding arm"/>
    <property type="match status" value="1"/>
</dbReference>
<dbReference type="PROSITE" id="PS50862">
    <property type="entry name" value="AA_TRNA_LIGASE_II"/>
    <property type="match status" value="1"/>
</dbReference>
<feature type="chain" id="PRO_0000278053" description="Serine--tRNA ligase">
    <location>
        <begin position="1"/>
        <end position="426"/>
    </location>
</feature>
<feature type="binding site" evidence="1">
    <location>
        <begin position="229"/>
        <end position="231"/>
    </location>
    <ligand>
        <name>L-serine</name>
        <dbReference type="ChEBI" id="CHEBI:33384"/>
    </ligand>
</feature>
<feature type="binding site" evidence="1">
    <location>
        <begin position="260"/>
        <end position="262"/>
    </location>
    <ligand>
        <name>ATP</name>
        <dbReference type="ChEBI" id="CHEBI:30616"/>
    </ligand>
</feature>
<feature type="binding site" evidence="1">
    <location>
        <position position="283"/>
    </location>
    <ligand>
        <name>L-serine</name>
        <dbReference type="ChEBI" id="CHEBI:33384"/>
    </ligand>
</feature>
<feature type="binding site" evidence="1">
    <location>
        <begin position="347"/>
        <end position="350"/>
    </location>
    <ligand>
        <name>ATP</name>
        <dbReference type="ChEBI" id="CHEBI:30616"/>
    </ligand>
</feature>
<feature type="binding site" evidence="1">
    <location>
        <position position="383"/>
    </location>
    <ligand>
        <name>L-serine</name>
        <dbReference type="ChEBI" id="CHEBI:33384"/>
    </ligand>
</feature>
<comment type="function">
    <text evidence="1">Catalyzes the attachment of serine to tRNA(Ser). Is also able to aminoacylate tRNA(Sec) with serine, to form the misacylated tRNA L-seryl-tRNA(Sec), which will be further converted into selenocysteinyl-tRNA(Sec).</text>
</comment>
<comment type="catalytic activity">
    <reaction evidence="1">
        <text>tRNA(Ser) + L-serine + ATP = L-seryl-tRNA(Ser) + AMP + diphosphate + H(+)</text>
        <dbReference type="Rhea" id="RHEA:12292"/>
        <dbReference type="Rhea" id="RHEA-COMP:9669"/>
        <dbReference type="Rhea" id="RHEA-COMP:9703"/>
        <dbReference type="ChEBI" id="CHEBI:15378"/>
        <dbReference type="ChEBI" id="CHEBI:30616"/>
        <dbReference type="ChEBI" id="CHEBI:33019"/>
        <dbReference type="ChEBI" id="CHEBI:33384"/>
        <dbReference type="ChEBI" id="CHEBI:78442"/>
        <dbReference type="ChEBI" id="CHEBI:78533"/>
        <dbReference type="ChEBI" id="CHEBI:456215"/>
        <dbReference type="EC" id="6.1.1.11"/>
    </reaction>
</comment>
<comment type="catalytic activity">
    <reaction evidence="1">
        <text>tRNA(Sec) + L-serine + ATP = L-seryl-tRNA(Sec) + AMP + diphosphate + H(+)</text>
        <dbReference type="Rhea" id="RHEA:42580"/>
        <dbReference type="Rhea" id="RHEA-COMP:9742"/>
        <dbReference type="Rhea" id="RHEA-COMP:10128"/>
        <dbReference type="ChEBI" id="CHEBI:15378"/>
        <dbReference type="ChEBI" id="CHEBI:30616"/>
        <dbReference type="ChEBI" id="CHEBI:33019"/>
        <dbReference type="ChEBI" id="CHEBI:33384"/>
        <dbReference type="ChEBI" id="CHEBI:78442"/>
        <dbReference type="ChEBI" id="CHEBI:78533"/>
        <dbReference type="ChEBI" id="CHEBI:456215"/>
        <dbReference type="EC" id="6.1.1.11"/>
    </reaction>
</comment>
<comment type="pathway">
    <text evidence="1">Aminoacyl-tRNA biosynthesis; selenocysteinyl-tRNA(Sec) biosynthesis; L-seryl-tRNA(Sec) from L-serine and tRNA(Sec): step 1/1.</text>
</comment>
<comment type="subunit">
    <text evidence="1">Homodimer. The tRNA molecule binds across the dimer.</text>
</comment>
<comment type="subcellular location">
    <subcellularLocation>
        <location evidence="1">Cytoplasm</location>
    </subcellularLocation>
</comment>
<comment type="domain">
    <text evidence="1">Consists of two distinct domains, a catalytic core and a N-terminal extension that is involved in tRNA binding.</text>
</comment>
<comment type="similarity">
    <text evidence="1">Belongs to the class-II aminoacyl-tRNA synthetase family. Type-1 seryl-tRNA synthetase subfamily.</text>
</comment>
<organism>
    <name type="scientific">Rickettsia bellii (strain RML369-C)</name>
    <dbReference type="NCBI Taxonomy" id="336407"/>
    <lineage>
        <taxon>Bacteria</taxon>
        <taxon>Pseudomonadati</taxon>
        <taxon>Pseudomonadota</taxon>
        <taxon>Alphaproteobacteria</taxon>
        <taxon>Rickettsiales</taxon>
        <taxon>Rickettsiaceae</taxon>
        <taxon>Rickettsieae</taxon>
        <taxon>Rickettsia</taxon>
        <taxon>belli group</taxon>
    </lineage>
</organism>
<evidence type="ECO:0000255" key="1">
    <source>
        <dbReference type="HAMAP-Rule" id="MF_00176"/>
    </source>
</evidence>
<gene>
    <name evidence="1" type="primary">serS</name>
    <name type="ordered locus">RBE_0079</name>
</gene>
<keyword id="KW-0030">Aminoacyl-tRNA synthetase</keyword>
<keyword id="KW-0067">ATP-binding</keyword>
<keyword id="KW-0963">Cytoplasm</keyword>
<keyword id="KW-0436">Ligase</keyword>
<keyword id="KW-0547">Nucleotide-binding</keyword>
<keyword id="KW-0648">Protein biosynthesis</keyword>
<protein>
    <recommendedName>
        <fullName evidence="1">Serine--tRNA ligase</fullName>
        <ecNumber evidence="1">6.1.1.11</ecNumber>
    </recommendedName>
    <alternativeName>
        <fullName evidence="1">Seryl-tRNA synthetase</fullName>
        <shortName evidence="1">SerRS</shortName>
    </alternativeName>
    <alternativeName>
        <fullName evidence="1">Seryl-tRNA(Ser/Sec) synthetase</fullName>
    </alternativeName>
</protein>